<protein>
    <recommendedName>
        <fullName>Pleckstrin homology domain-containing family G member 5</fullName>
        <shortName>PH domain-containing family G member 5</shortName>
    </recommendedName>
    <alternativeName>
        <fullName>Guanine nucleotide exchange factor 720</fullName>
        <shortName>GEF720</shortName>
    </alternativeName>
</protein>
<evidence type="ECO:0000250" key="1"/>
<evidence type="ECO:0000250" key="2">
    <source>
        <dbReference type="UniProtKB" id="Q66T02"/>
    </source>
</evidence>
<evidence type="ECO:0000255" key="3">
    <source>
        <dbReference type="PROSITE-ProRule" id="PRU00062"/>
    </source>
</evidence>
<evidence type="ECO:0000255" key="4">
    <source>
        <dbReference type="PROSITE-ProRule" id="PRU00145"/>
    </source>
</evidence>
<evidence type="ECO:0000256" key="5">
    <source>
        <dbReference type="SAM" id="MobiDB-lite"/>
    </source>
</evidence>
<evidence type="ECO:0000269" key="6">
    <source>
    </source>
</evidence>
<evidence type="ECO:0000269" key="7">
    <source>
    </source>
</evidence>
<evidence type="ECO:0000269" key="8">
    <source>
    </source>
</evidence>
<evidence type="ECO:0000269" key="9">
    <source>
    </source>
</evidence>
<evidence type="ECO:0000269" key="10">
    <source>
    </source>
</evidence>
<evidence type="ECO:0000269" key="11">
    <source>
    </source>
</evidence>
<evidence type="ECO:0000305" key="12"/>
<comment type="function">
    <text evidence="2 6 9">Functions as a guanine exchange factor (GEF) for RAB26 and thus regulates autophagy of synaptic vesicles in axon terminal of motoneurons (By similarity). Involved in the control of neuronal cell differentiation (PubMed:11704860). Plays a role in angiogenesis through regulation of endothelial cells chemotaxis. Also affects the migration, adhesion, and matrix/bone degradation in macrophages and osteoclasts (PubMed:23777631).</text>
</comment>
<comment type="subunit">
    <text evidence="1">Interacts with GIPC1/synectin and RHOA.</text>
</comment>
<comment type="interaction">
    <interactant intactId="EBI-11980215">
        <id>O94827-4</id>
    </interactant>
    <interactant intactId="EBI-2371423">
        <id>O43865</id>
        <label>AHCYL1</label>
    </interactant>
    <organismsDiffer>false</organismsDiffer>
    <experiments>3</experiments>
</comment>
<comment type="interaction">
    <interactant intactId="EBI-11980215">
        <id>O94827-4</id>
    </interactant>
    <interactant intactId="EBI-1244971">
        <id>Q15669</id>
        <label>RHOH</label>
    </interactant>
    <organismsDiffer>false</organismsDiffer>
    <experiments>3</experiments>
</comment>
<comment type="interaction">
    <interactant intactId="EBI-11980215">
        <id>O94827-4</id>
    </interactant>
    <interactant intactId="EBI-1111534">
        <id>P61587</id>
        <label>RND3</label>
    </interactant>
    <organismsDiffer>false</organismsDiffer>
    <experiments>3</experiments>
</comment>
<comment type="subcellular location">
    <subcellularLocation>
        <location evidence="2">Cytoplasm</location>
    </subcellularLocation>
    <subcellularLocation>
        <location evidence="2">Cytoplasm</location>
        <location evidence="2">Perinuclear region</location>
    </subcellularLocation>
    <subcellularLocation>
        <location evidence="2">Cell membrane</location>
    </subcellularLocation>
    <subcellularLocation>
        <location evidence="2">Cell junction</location>
    </subcellularLocation>
    <subcellularLocation>
        <location evidence="2">Cell projection</location>
        <location evidence="2">Lamellipodium</location>
    </subcellularLocation>
    <text evidence="2">Predominantly cytoplasmic, however when endothelial cells are stimulated with lysophosphatidic acid, PLEKHG5 is found in perinuclear regions and at the cell membrane. Localizes at cell-cell junctions in quiescent endothelial cells, and relocalizes to cytoplasmic vesicle and the leading edge of lamellipodia in migrating endothelial cells.</text>
</comment>
<comment type="alternative products">
    <event type="alternative splicing"/>
    <isoform>
        <id>O94827-5</id>
        <name>1</name>
        <sequence type="displayed"/>
    </isoform>
    <isoform>
        <id>O94827-3</id>
        <name>2</name>
        <sequence type="described" ref="VSP_060959"/>
    </isoform>
    <isoform>
        <id>O94827-4</id>
        <name>3</name>
        <sequence type="described" ref="VSP_060961 VSP_060962"/>
    </isoform>
    <isoform>
        <id>O94827-7</id>
        <name>4</name>
        <sequence type="described" ref="VSP_060960"/>
    </isoform>
</comment>
<comment type="tissue specificity">
    <text evidence="6 7 11">Predominantly expressed in the peripheral nervous system and brain. Highest expression is observed in heart, lung, kidney, testis and moderate expression is present in spleen, pancreas, skeletal muscle, ovary and liver. Weakly expressed in glioblastoma (GBM) cell lines.</text>
</comment>
<comment type="disease" evidence="8">
    <disease id="DI-00405">
        <name>Neuronopathy, distal hereditary motor, autosomal recessive 4</name>
        <acronym>HMNR4</acronym>
        <description>A form of distal hereditary motor neuronopathy, a heterogeneous group of neuromuscular disorders caused by selective degeneration of motor neurons in the anterior horn of the spinal cord, without sensory deficit in the posterior horn. The overall clinical picture consists of a classical distal muscular atrophy syndrome in the legs without clinical sensory loss. The disease starts with weakness and wasting of distal muscles of the anterior tibial and peroneal compartments of the legs. Later on, weakness and atrophy may expand to the proximal muscles of the lower limbs and/or to the distal upper limbs. HMNR4 is characterized by childhood onset, generalized muscle weakness and atrophy with denervation and normal sensation. Bulbar symptoms and pyramidal signs are absent.</description>
        <dbReference type="MIM" id="611067"/>
    </disease>
    <text>The disease is caused by variants affecting the gene represented in this entry.</text>
</comment>
<comment type="disease" evidence="9 10">
    <disease id="DI-03862">
        <name>Charcot-Marie-Tooth disease, recessive intermediate C</name>
        <acronym>CMTRIC</acronym>
        <description>A form of Charcot-Marie-Tooth disease, a disorder of the peripheral nervous system, characterized by progressive weakness and atrophy, initially of the peroneal muscles and later of the distal muscles of the arms. Recessive intermediate forms of Charcot-Marie-Tooth disease are characterized by clinical and pathologic features intermediate between demyelinating and axonal peripheral neuropathies, and motor median nerve conduction velocities ranging from 25 to 45 m/sec.</description>
        <dbReference type="MIM" id="615376"/>
    </disease>
    <text>The disease is caused by variants affecting the gene represented in this entry.</text>
</comment>
<comment type="sequence caution" evidence="12">
    <conflict type="erroneous initiation">
        <sequence resource="EMBL-CDS" id="BAA34440"/>
    </conflict>
    <text>Extended N-terminus.</text>
</comment>
<comment type="sequence caution" evidence="12">
    <conflict type="miscellaneous discrepancy">
        <sequence resource="EMBL-CDS" id="BAC77354"/>
    </conflict>
    <text>Aberrant splicing.</text>
</comment>
<comment type="sequence caution" evidence="12">
    <conflict type="miscellaneous discrepancy">
        <sequence resource="EMBL-CDS" id="BAC85124"/>
    </conflict>
    <text>Probable cloning artifact.</text>
</comment>
<comment type="sequence caution" evidence="12">
    <conflict type="erroneous initiation">
        <sequence resource="EMBL-CDS" id="BAG53269"/>
    </conflict>
    <text>Extended N-terminus.</text>
</comment>
<comment type="sequence caution" evidence="12">
    <conflict type="erroneous initiation">
        <sequence resource="EMBL-CDS" id="BAH11909"/>
    </conflict>
    <text>Extended N-terminus.</text>
</comment>
<keyword id="KW-0025">Alternative splicing</keyword>
<keyword id="KW-0965">Cell junction</keyword>
<keyword id="KW-1003">Cell membrane</keyword>
<keyword id="KW-0966">Cell projection</keyword>
<keyword id="KW-0144">Charcot-Marie-Tooth disease</keyword>
<keyword id="KW-0963">Cytoplasm</keyword>
<keyword id="KW-0225">Disease variant</keyword>
<keyword id="KW-0472">Membrane</keyword>
<keyword id="KW-0523">Neurodegeneration</keyword>
<keyword id="KW-0622">Neuropathy</keyword>
<keyword id="KW-0597">Phosphoprotein</keyword>
<keyword id="KW-1267">Proteomics identification</keyword>
<keyword id="KW-1185">Reference proteome</keyword>
<organism>
    <name type="scientific">Homo sapiens</name>
    <name type="common">Human</name>
    <dbReference type="NCBI Taxonomy" id="9606"/>
    <lineage>
        <taxon>Eukaryota</taxon>
        <taxon>Metazoa</taxon>
        <taxon>Chordata</taxon>
        <taxon>Craniata</taxon>
        <taxon>Vertebrata</taxon>
        <taxon>Euteleostomi</taxon>
        <taxon>Mammalia</taxon>
        <taxon>Eutheria</taxon>
        <taxon>Euarchontoglires</taxon>
        <taxon>Primates</taxon>
        <taxon>Haplorrhini</taxon>
        <taxon>Catarrhini</taxon>
        <taxon>Hominidae</taxon>
        <taxon>Homo</taxon>
    </lineage>
</organism>
<reference key="1">
    <citation type="journal article" date="1998" name="DNA Res.">
        <title>Prediction of the coding sequences of unidentified human genes. XI. The complete sequences of 100 new cDNA clones from brain which code for large proteins in vitro.</title>
        <authorList>
            <person name="Nagase T."/>
            <person name="Ishikawa K."/>
            <person name="Suyama M."/>
            <person name="Kikuno R."/>
            <person name="Miyajima N."/>
            <person name="Tanaka A."/>
            <person name="Kotani H."/>
            <person name="Nomura N."/>
            <person name="Ohara O."/>
        </authorList>
    </citation>
    <scope>NUCLEOTIDE SEQUENCE [LARGE SCALE MRNA] (ISOFORM 1)</scope>
    <scope>TISSUE SPECIFICITY</scope>
    <source>
        <tissue>Brain</tissue>
    </source>
</reference>
<reference key="2">
    <citation type="journal article" date="2004" name="Nat. Genet.">
        <title>Complete sequencing and characterization of 21,243 full-length human cDNAs.</title>
        <authorList>
            <person name="Ota T."/>
            <person name="Suzuki Y."/>
            <person name="Nishikawa T."/>
            <person name="Otsuki T."/>
            <person name="Sugiyama T."/>
            <person name="Irie R."/>
            <person name="Wakamatsu A."/>
            <person name="Hayashi K."/>
            <person name="Sato H."/>
            <person name="Nagai K."/>
            <person name="Kimura K."/>
            <person name="Makita H."/>
            <person name="Sekine M."/>
            <person name="Obayashi M."/>
            <person name="Nishi T."/>
            <person name="Shibahara T."/>
            <person name="Tanaka T."/>
            <person name="Ishii S."/>
            <person name="Yamamoto J."/>
            <person name="Saito K."/>
            <person name="Kawai Y."/>
            <person name="Isono Y."/>
            <person name="Nakamura Y."/>
            <person name="Nagahari K."/>
            <person name="Murakami K."/>
            <person name="Yasuda T."/>
            <person name="Iwayanagi T."/>
            <person name="Wagatsuma M."/>
            <person name="Shiratori A."/>
            <person name="Sudo H."/>
            <person name="Hosoiri T."/>
            <person name="Kaku Y."/>
            <person name="Kodaira H."/>
            <person name="Kondo H."/>
            <person name="Sugawara M."/>
            <person name="Takahashi M."/>
            <person name="Kanda K."/>
            <person name="Yokoi T."/>
            <person name="Furuya T."/>
            <person name="Kikkawa E."/>
            <person name="Omura Y."/>
            <person name="Abe K."/>
            <person name="Kamihara K."/>
            <person name="Katsuta N."/>
            <person name="Sato K."/>
            <person name="Tanikawa M."/>
            <person name="Yamazaki M."/>
            <person name="Ninomiya K."/>
            <person name="Ishibashi T."/>
            <person name="Yamashita H."/>
            <person name="Murakawa K."/>
            <person name="Fujimori K."/>
            <person name="Tanai H."/>
            <person name="Kimata M."/>
            <person name="Watanabe M."/>
            <person name="Hiraoka S."/>
            <person name="Chiba Y."/>
            <person name="Ishida S."/>
            <person name="Ono Y."/>
            <person name="Takiguchi S."/>
            <person name="Watanabe S."/>
            <person name="Yosida M."/>
            <person name="Hotuta T."/>
            <person name="Kusano J."/>
            <person name="Kanehori K."/>
            <person name="Takahashi-Fujii A."/>
            <person name="Hara H."/>
            <person name="Tanase T.-O."/>
            <person name="Nomura Y."/>
            <person name="Togiya S."/>
            <person name="Komai F."/>
            <person name="Hara R."/>
            <person name="Takeuchi K."/>
            <person name="Arita M."/>
            <person name="Imose N."/>
            <person name="Musashino K."/>
            <person name="Yuuki H."/>
            <person name="Oshima A."/>
            <person name="Sasaki N."/>
            <person name="Aotsuka S."/>
            <person name="Yoshikawa Y."/>
            <person name="Matsunawa H."/>
            <person name="Ichihara T."/>
            <person name="Shiohata N."/>
            <person name="Sano S."/>
            <person name="Moriya S."/>
            <person name="Momiyama H."/>
            <person name="Satoh N."/>
            <person name="Takami S."/>
            <person name="Terashima Y."/>
            <person name="Suzuki O."/>
            <person name="Nakagawa S."/>
            <person name="Senoh A."/>
            <person name="Mizoguchi H."/>
            <person name="Goto Y."/>
            <person name="Shimizu F."/>
            <person name="Wakebe H."/>
            <person name="Hishigaki H."/>
            <person name="Watanabe T."/>
            <person name="Sugiyama A."/>
            <person name="Takemoto M."/>
            <person name="Kawakami B."/>
            <person name="Yamazaki M."/>
            <person name="Watanabe K."/>
            <person name="Kumagai A."/>
            <person name="Itakura S."/>
            <person name="Fukuzumi Y."/>
            <person name="Fujimori Y."/>
            <person name="Komiyama M."/>
            <person name="Tashiro H."/>
            <person name="Tanigami A."/>
            <person name="Fujiwara T."/>
            <person name="Ono T."/>
            <person name="Yamada K."/>
            <person name="Fujii Y."/>
            <person name="Ozaki K."/>
            <person name="Hirao M."/>
            <person name="Ohmori Y."/>
            <person name="Kawabata A."/>
            <person name="Hikiji T."/>
            <person name="Kobatake N."/>
            <person name="Inagaki H."/>
            <person name="Ikema Y."/>
            <person name="Okamoto S."/>
            <person name="Okitani R."/>
            <person name="Kawakami T."/>
            <person name="Noguchi S."/>
            <person name="Itoh T."/>
            <person name="Shigeta K."/>
            <person name="Senba T."/>
            <person name="Matsumura K."/>
            <person name="Nakajima Y."/>
            <person name="Mizuno T."/>
            <person name="Morinaga M."/>
            <person name="Sasaki M."/>
            <person name="Togashi T."/>
            <person name="Oyama M."/>
            <person name="Hata H."/>
            <person name="Watanabe M."/>
            <person name="Komatsu T."/>
            <person name="Mizushima-Sugano J."/>
            <person name="Satoh T."/>
            <person name="Shirai Y."/>
            <person name="Takahashi Y."/>
            <person name="Nakagawa K."/>
            <person name="Okumura K."/>
            <person name="Nagase T."/>
            <person name="Nomura N."/>
            <person name="Kikuchi H."/>
            <person name="Masuho Y."/>
            <person name="Yamashita R."/>
            <person name="Nakai K."/>
            <person name="Yada T."/>
            <person name="Nakamura Y."/>
            <person name="Ohara O."/>
            <person name="Isogai T."/>
            <person name="Sugano S."/>
        </authorList>
    </citation>
    <scope>NUCLEOTIDE SEQUENCE [LARGE SCALE MRNA] (ISOFORMS 2 AND 4)</scope>
    <source>
        <tissue>Brain</tissue>
        <tissue>Teratocarcinoma</tissue>
    </source>
</reference>
<reference key="3">
    <citation type="journal article" date="2006" name="Nature">
        <title>The DNA sequence and biological annotation of human chromosome 1.</title>
        <authorList>
            <person name="Gregory S.G."/>
            <person name="Barlow K.F."/>
            <person name="McLay K.E."/>
            <person name="Kaul R."/>
            <person name="Swarbreck D."/>
            <person name="Dunham A."/>
            <person name="Scott C.E."/>
            <person name="Howe K.L."/>
            <person name="Woodfine K."/>
            <person name="Spencer C.C.A."/>
            <person name="Jones M.C."/>
            <person name="Gillson C."/>
            <person name="Searle S."/>
            <person name="Zhou Y."/>
            <person name="Kokocinski F."/>
            <person name="McDonald L."/>
            <person name="Evans R."/>
            <person name="Phillips K."/>
            <person name="Atkinson A."/>
            <person name="Cooper R."/>
            <person name="Jones C."/>
            <person name="Hall R.E."/>
            <person name="Andrews T.D."/>
            <person name="Lloyd C."/>
            <person name="Ainscough R."/>
            <person name="Almeida J.P."/>
            <person name="Ambrose K.D."/>
            <person name="Anderson F."/>
            <person name="Andrew R.W."/>
            <person name="Ashwell R.I.S."/>
            <person name="Aubin K."/>
            <person name="Babbage A.K."/>
            <person name="Bagguley C.L."/>
            <person name="Bailey J."/>
            <person name="Beasley H."/>
            <person name="Bethel G."/>
            <person name="Bird C.P."/>
            <person name="Bray-Allen S."/>
            <person name="Brown J.Y."/>
            <person name="Brown A.J."/>
            <person name="Buckley D."/>
            <person name="Burton J."/>
            <person name="Bye J."/>
            <person name="Carder C."/>
            <person name="Chapman J.C."/>
            <person name="Clark S.Y."/>
            <person name="Clarke G."/>
            <person name="Clee C."/>
            <person name="Cobley V."/>
            <person name="Collier R.E."/>
            <person name="Corby N."/>
            <person name="Coville G.J."/>
            <person name="Davies J."/>
            <person name="Deadman R."/>
            <person name="Dunn M."/>
            <person name="Earthrowl M."/>
            <person name="Ellington A.G."/>
            <person name="Errington H."/>
            <person name="Frankish A."/>
            <person name="Frankland J."/>
            <person name="French L."/>
            <person name="Garner P."/>
            <person name="Garnett J."/>
            <person name="Gay L."/>
            <person name="Ghori M.R.J."/>
            <person name="Gibson R."/>
            <person name="Gilby L.M."/>
            <person name="Gillett W."/>
            <person name="Glithero R.J."/>
            <person name="Grafham D.V."/>
            <person name="Griffiths C."/>
            <person name="Griffiths-Jones S."/>
            <person name="Grocock R."/>
            <person name="Hammond S."/>
            <person name="Harrison E.S.I."/>
            <person name="Hart E."/>
            <person name="Haugen E."/>
            <person name="Heath P.D."/>
            <person name="Holmes S."/>
            <person name="Holt K."/>
            <person name="Howden P.J."/>
            <person name="Hunt A.R."/>
            <person name="Hunt S.E."/>
            <person name="Hunter G."/>
            <person name="Isherwood J."/>
            <person name="James R."/>
            <person name="Johnson C."/>
            <person name="Johnson D."/>
            <person name="Joy A."/>
            <person name="Kay M."/>
            <person name="Kershaw J.K."/>
            <person name="Kibukawa M."/>
            <person name="Kimberley A.M."/>
            <person name="King A."/>
            <person name="Knights A.J."/>
            <person name="Lad H."/>
            <person name="Laird G."/>
            <person name="Lawlor S."/>
            <person name="Leongamornlert D.A."/>
            <person name="Lloyd D.M."/>
            <person name="Loveland J."/>
            <person name="Lovell J."/>
            <person name="Lush M.J."/>
            <person name="Lyne R."/>
            <person name="Martin S."/>
            <person name="Mashreghi-Mohammadi M."/>
            <person name="Matthews L."/>
            <person name="Matthews N.S.W."/>
            <person name="McLaren S."/>
            <person name="Milne S."/>
            <person name="Mistry S."/>
            <person name="Moore M.J.F."/>
            <person name="Nickerson T."/>
            <person name="O'Dell C.N."/>
            <person name="Oliver K."/>
            <person name="Palmeiri A."/>
            <person name="Palmer S.A."/>
            <person name="Parker A."/>
            <person name="Patel D."/>
            <person name="Pearce A.V."/>
            <person name="Peck A.I."/>
            <person name="Pelan S."/>
            <person name="Phelps K."/>
            <person name="Phillimore B.J."/>
            <person name="Plumb R."/>
            <person name="Rajan J."/>
            <person name="Raymond C."/>
            <person name="Rouse G."/>
            <person name="Saenphimmachak C."/>
            <person name="Sehra H.K."/>
            <person name="Sheridan E."/>
            <person name="Shownkeen R."/>
            <person name="Sims S."/>
            <person name="Skuce C.D."/>
            <person name="Smith M."/>
            <person name="Steward C."/>
            <person name="Subramanian S."/>
            <person name="Sycamore N."/>
            <person name="Tracey A."/>
            <person name="Tromans A."/>
            <person name="Van Helmond Z."/>
            <person name="Wall M."/>
            <person name="Wallis J.M."/>
            <person name="White S."/>
            <person name="Whitehead S.L."/>
            <person name="Wilkinson J.E."/>
            <person name="Willey D.L."/>
            <person name="Williams H."/>
            <person name="Wilming L."/>
            <person name="Wray P.W."/>
            <person name="Wu Z."/>
            <person name="Coulson A."/>
            <person name="Vaudin M."/>
            <person name="Sulston J.E."/>
            <person name="Durbin R.M."/>
            <person name="Hubbard T."/>
            <person name="Wooster R."/>
            <person name="Dunham I."/>
            <person name="Carter N.P."/>
            <person name="McVean G."/>
            <person name="Ross M.T."/>
            <person name="Harrow J."/>
            <person name="Olson M.V."/>
            <person name="Beck S."/>
            <person name="Rogers J."/>
            <person name="Bentley D.R."/>
        </authorList>
    </citation>
    <scope>NUCLEOTIDE SEQUENCE [LARGE SCALE GENOMIC DNA]</scope>
</reference>
<reference key="4">
    <citation type="submission" date="2005-07" db="EMBL/GenBank/DDBJ databases">
        <authorList>
            <person name="Mural R.J."/>
            <person name="Istrail S."/>
            <person name="Sutton G.G."/>
            <person name="Florea L."/>
            <person name="Halpern A.L."/>
            <person name="Mobarry C.M."/>
            <person name="Lippert R."/>
            <person name="Walenz B."/>
            <person name="Shatkay H."/>
            <person name="Dew I."/>
            <person name="Miller J.R."/>
            <person name="Flanigan M.J."/>
            <person name="Edwards N.J."/>
            <person name="Bolanos R."/>
            <person name="Fasulo D."/>
            <person name="Halldorsson B.V."/>
            <person name="Hannenhalli S."/>
            <person name="Turner R."/>
            <person name="Yooseph S."/>
            <person name="Lu F."/>
            <person name="Nusskern D.R."/>
            <person name="Shue B.C."/>
            <person name="Zheng X.H."/>
            <person name="Zhong F."/>
            <person name="Delcher A.L."/>
            <person name="Huson D.H."/>
            <person name="Kravitz S.A."/>
            <person name="Mouchard L."/>
            <person name="Reinert K."/>
            <person name="Remington K.A."/>
            <person name="Clark A.G."/>
            <person name="Waterman M.S."/>
            <person name="Eichler E.E."/>
            <person name="Adams M.D."/>
            <person name="Hunkapiller M.W."/>
            <person name="Myers E.W."/>
            <person name="Venter J.C."/>
        </authorList>
    </citation>
    <scope>NUCLEOTIDE SEQUENCE [LARGE SCALE GENOMIC DNA]</scope>
</reference>
<reference key="5">
    <citation type="journal article" date="2004" name="Genome Res.">
        <title>The status, quality, and expansion of the NIH full-length cDNA project: the Mammalian Gene Collection (MGC).</title>
        <authorList>
            <consortium name="The MGC Project Team"/>
        </authorList>
    </citation>
    <scope>NUCLEOTIDE SEQUENCE [LARGE SCALE MRNA] (ISOFORMS 2 AND 3)</scope>
    <source>
        <tissue>Pancreas</tissue>
        <tissue>Skin</tissue>
    </source>
</reference>
<reference key="6">
    <citation type="journal article" date="2003" name="Oncogene">
        <title>Large-scale identification and characterization of human genes that activate NF-kappaB and MAPK signaling pathways.</title>
        <authorList>
            <person name="Matsuda A."/>
            <person name="Suzuki Y."/>
            <person name="Honda G."/>
            <person name="Muramatsu S."/>
            <person name="Matsuzaki O."/>
            <person name="Nagano Y."/>
            <person name="Doi T."/>
            <person name="Shimotohno K."/>
            <person name="Harada T."/>
            <person name="Nishida E."/>
            <person name="Hayashi H."/>
            <person name="Sugano S."/>
        </authorList>
    </citation>
    <scope>NUCLEOTIDE SEQUENCE [LARGE SCALE MRNA] OF 19-1006 (ISOFORM 1)</scope>
    <source>
        <tissue>Lung fibroblast</tissue>
    </source>
</reference>
<reference key="7">
    <citation type="submission" date="2003-09" db="EMBL/GenBank/DDBJ databases">
        <title>The nucleotide sequence of a long cDNA clone isolated from human spleen.</title>
        <authorList>
            <person name="Jikuya H."/>
            <person name="Takano J."/>
            <person name="Kikuno R."/>
            <person name="Nagase T."/>
            <person name="Ohara O."/>
        </authorList>
    </citation>
    <scope>NUCLEOTIDE SEQUENCE [LARGE SCALE MRNA] OF 102-1006 (ISOFORM 1)</scope>
    <source>
        <tissue>Spleen</tissue>
    </source>
</reference>
<reference key="8">
    <citation type="journal article" date="2001" name="Oncogene">
        <title>The gene for a new brain specific RhoA exchange factor maps to the highly unstable chromosomal region 1p36.2-1p36.3.</title>
        <authorList>
            <person name="De Toledo M."/>
            <person name="Coulon V."/>
            <person name="Schmidt S."/>
            <person name="Fort P."/>
            <person name="Blangy A."/>
        </authorList>
    </citation>
    <scope>FUNCTION</scope>
    <scope>TISSUE SPECIFICITY</scope>
</reference>
<reference key="9">
    <citation type="journal article" date="2006" name="Mol. Biol. Cell">
        <title>A PDZ-binding motif as a critical determinant of Rho guanine exchange factor function and cell phenotype.</title>
        <authorList>
            <person name="Liu M."/>
            <person name="Horowitz A."/>
        </authorList>
    </citation>
    <scope>TISSUE SPECIFICITY</scope>
</reference>
<reference key="10">
    <citation type="journal article" date="2013" name="Hum. Mol. Genet.">
        <title>PLEKHG5 deficiency leads to an intermediate form of autosomal-recessive Charcot-Marie-Tooth disease.</title>
        <authorList>
            <person name="Azzedine H."/>
            <person name="Zavadakova P."/>
            <person name="Plante-Bordeneuve V."/>
            <person name="Vaz Pato M."/>
            <person name="Pinto N."/>
            <person name="Bartesaghi L."/>
            <person name="Zenker J."/>
            <person name="Poirot O."/>
            <person name="Bernard-Marissal N."/>
            <person name="Arnaud Gouttenoire E."/>
            <person name="Cartoni R."/>
            <person name="Title A."/>
            <person name="Venturini G."/>
            <person name="Medard J.J."/>
            <person name="Makowski E."/>
            <person name="Schoels L."/>
            <person name="Claeys K.G."/>
            <person name="Stendel C."/>
            <person name="Roos A."/>
            <person name="Weis J."/>
            <person name="Dubourg O."/>
            <person name="Leal Loureiro J."/>
            <person name="Stevanin G."/>
            <person name="Said G."/>
            <person name="Amato A."/>
            <person name="Baraban J."/>
            <person name="Leguern E."/>
            <person name="Senderek J."/>
            <person name="Rivolta C."/>
            <person name="Chrast R."/>
        </authorList>
    </citation>
    <scope>INVOLVEMENT IN CMTRIC</scope>
</reference>
<reference key="11">
    <citation type="journal article" date="2017" name="Exp. Cell Res.">
        <title>The Rho-specific guanine nucleotide exchange factor Plekhg5 modulates cell polarity, adhesion, migration, and podosome organization in macrophages and osteoclasts.</title>
        <authorList>
            <person name="Iwatake M."/>
            <person name="Nishishita K."/>
            <person name="Okamoto K."/>
            <person name="Tsukuba T."/>
        </authorList>
    </citation>
    <scope>FUNCTION</scope>
</reference>
<reference key="12">
    <citation type="journal article" date="2007" name="Am. J. Hum. Genet.">
        <title>The nuclear factor kappaB-activator gene PLEKHG5 is mutated in a form of autosomal recessive lower motor neuron disease with childhood onset.</title>
        <authorList>
            <person name="Maystadt I."/>
            <person name="Rezsoehazy R."/>
            <person name="Barkats M."/>
            <person name="Duque S."/>
            <person name="Vannuffel P."/>
            <person name="Remacle S."/>
            <person name="Lambert B."/>
            <person name="Najimi M."/>
            <person name="Sokal E."/>
            <person name="Munnich A."/>
            <person name="Viollet L."/>
            <person name="Verellen-Dumoulin C."/>
        </authorList>
    </citation>
    <scope>VARIANT HMNR4 SER-647</scope>
</reference>
<reference key="13">
    <citation type="journal article" date="2013" name="Orphanet J. Rare Dis.">
        <title>Mutations in the PLEKHG5 gene is relevant with autosomal recessive intermediate Charcot-Marie-Tooth disease.</title>
        <authorList>
            <person name="Kim H.J."/>
            <person name="Hong Y.B."/>
            <person name="Park J.M."/>
            <person name="Choi Y.R."/>
            <person name="Kim Y.J."/>
            <person name="Yoon B.R."/>
            <person name="Koo H."/>
            <person name="Yoo J.H."/>
            <person name="Kim S.B."/>
            <person name="Park M."/>
            <person name="Chung K.W."/>
            <person name="Choi B.O."/>
        </authorList>
    </citation>
    <scope>VARIANTS CMTRIC MET-663 AND ARG-820</scope>
    <scope>CHARACTERIZATION OF VARIANTS CMTRIC MET-663 AND ARG-820</scope>
</reference>
<gene>
    <name type="primary">PLEKHG5</name>
    <name type="synonym">KIAA0720</name>
</gene>
<feature type="chain" id="PRO_0000307134" description="Pleckstrin homology domain-containing family G member 5">
    <location>
        <begin position="1"/>
        <end position="1006"/>
    </location>
</feature>
<feature type="domain" description="DH" evidence="3">
    <location>
        <begin position="336"/>
        <end position="528"/>
    </location>
</feature>
<feature type="domain" description="PH" evidence="4">
    <location>
        <begin position="584"/>
        <end position="684"/>
    </location>
</feature>
<feature type="region of interest" description="Disordered" evidence="5">
    <location>
        <begin position="1"/>
        <end position="71"/>
    </location>
</feature>
<feature type="region of interest" description="Disordered" evidence="5">
    <location>
        <begin position="148"/>
        <end position="198"/>
    </location>
</feature>
<feature type="region of interest" description="Disordered" evidence="5">
    <location>
        <begin position="212"/>
        <end position="242"/>
    </location>
</feature>
<feature type="region of interest" description="Disordered" evidence="5">
    <location>
        <begin position="690"/>
        <end position="754"/>
    </location>
</feature>
<feature type="region of interest" description="Disordered" evidence="5">
    <location>
        <begin position="768"/>
        <end position="820"/>
    </location>
</feature>
<feature type="region of interest" description="Disordered" evidence="5">
    <location>
        <begin position="837"/>
        <end position="863"/>
    </location>
</feature>
<feature type="region of interest" description="Disordered" evidence="5">
    <location>
        <begin position="950"/>
        <end position="979"/>
    </location>
</feature>
<feature type="compositionally biased region" description="Acidic residues" evidence="5">
    <location>
        <begin position="36"/>
        <end position="45"/>
    </location>
</feature>
<feature type="compositionally biased region" description="Basic and acidic residues" evidence="5">
    <location>
        <begin position="151"/>
        <end position="165"/>
    </location>
</feature>
<feature type="compositionally biased region" description="Basic and acidic residues" evidence="5">
    <location>
        <begin position="183"/>
        <end position="194"/>
    </location>
</feature>
<feature type="compositionally biased region" description="Low complexity" evidence="5">
    <location>
        <begin position="224"/>
        <end position="242"/>
    </location>
</feature>
<feature type="compositionally biased region" description="Acidic residues" evidence="5">
    <location>
        <begin position="704"/>
        <end position="726"/>
    </location>
</feature>
<feature type="compositionally biased region" description="Polar residues" evidence="5">
    <location>
        <begin position="727"/>
        <end position="754"/>
    </location>
</feature>
<feature type="compositionally biased region" description="Polar residues" evidence="5">
    <location>
        <begin position="769"/>
        <end position="785"/>
    </location>
</feature>
<feature type="compositionally biased region" description="Low complexity" evidence="5">
    <location>
        <begin position="786"/>
        <end position="803"/>
    </location>
</feature>
<feature type="compositionally biased region" description="Pro residues" evidence="5">
    <location>
        <begin position="847"/>
        <end position="856"/>
    </location>
</feature>
<feature type="modified residue" description="Phosphothreonine" evidence="2">
    <location>
        <position position="729"/>
    </location>
</feature>
<feature type="modified residue" description="Phosphoserine" evidence="2">
    <location>
        <position position="734"/>
    </location>
</feature>
<feature type="modified residue" description="Phosphoserine" evidence="2">
    <location>
        <position position="851"/>
    </location>
</feature>
<feature type="modified residue" description="Phosphoserine" evidence="2">
    <location>
        <position position="876"/>
    </location>
</feature>
<feature type="modified residue" description="Phosphoserine" evidence="2">
    <location>
        <position position="881"/>
    </location>
</feature>
<feature type="splice variant" id="VSP_060959" description="In isoform 2.">
    <original>M</original>
    <variation>MDKGRAAKVCHHADCQQLHRRGPLNLCEACDSKFHSTM</variation>
    <location>
        <position position="1"/>
    </location>
</feature>
<feature type="splice variant" id="VSP_060960" description="In isoform 4.">
    <original>M</original>
    <variation>MGTGPGVSGRLAASRPGPGLPLRDSEPSWAGGRARDGESQVCHHADCQQLHRRGPLNLCEACDSKFHSTM</variation>
    <location>
        <position position="1"/>
    </location>
</feature>
<feature type="splice variant" id="VSP_060961" description="In isoform 3.">
    <original>GIRTQGSPQEAGPSWDCR</original>
    <variation>AQEADPGPALPNQDHPAA</variation>
    <location>
        <begin position="913"/>
        <end position="930"/>
    </location>
</feature>
<feature type="splice variant" id="VSP_060962" description="In isoform 3.">
    <location>
        <begin position="931"/>
        <end position="1006"/>
    </location>
</feature>
<feature type="sequence variant" id="VAR_035357" description="In HMNR4; stability and intracellular location affected severely impairing the NF-kappa-B transduction pathway; dbSNP:rs63750315." evidence="8">
    <original>F</original>
    <variation>S</variation>
    <location>
        <position position="647"/>
    </location>
</feature>
<feature type="sequence variant" id="VAR_070217" description="In CMTRIC; in vitro assay suggests a defect in activating the NF-kappa-B signaling pathway; dbSNP:rs397515456." evidence="10">
    <original>T</original>
    <variation>M</variation>
    <location>
        <position position="663"/>
    </location>
</feature>
<feature type="sequence variant" id="VAR_070218" description="In CMTRIC; in vitro assay suggests a defect in activating the NF-kappa-B signaling pathway; dbSNP:rs202191898." evidence="10">
    <original>G</original>
    <variation>R</variation>
    <location>
        <position position="820"/>
    </location>
</feature>
<feature type="sequence conflict" description="In Ref. 2; BAH11909." evidence="12" ref="2">
    <original>P</original>
    <variation>L</variation>
    <location>
        <position position="106"/>
    </location>
</feature>
<feature type="sequence conflict" description="In Ref. 1; BAA34440." evidence="12" ref="1">
    <original>T</original>
    <variation>S</variation>
    <location>
        <position position="238"/>
    </location>
</feature>
<feature type="sequence conflict" description="In Ref. 2; BAG53269." evidence="12" ref="2">
    <original>M</original>
    <variation>T</variation>
    <location>
        <position position="514"/>
    </location>
</feature>
<feature type="sequence conflict" description="In Ref. 2; BAG53269." evidence="12" ref="2">
    <original>E</original>
    <variation>G</variation>
    <location>
        <position position="904"/>
    </location>
</feature>
<dbReference type="EMBL" id="AB018263">
    <property type="protein sequence ID" value="BAA34440.2"/>
    <property type="status" value="ALT_INIT"/>
    <property type="molecule type" value="mRNA"/>
</dbReference>
<dbReference type="EMBL" id="AK096347">
    <property type="protein sequence ID" value="BAG53269.1"/>
    <property type="status" value="ALT_INIT"/>
    <property type="molecule type" value="mRNA"/>
</dbReference>
<dbReference type="EMBL" id="AK294875">
    <property type="protein sequence ID" value="BAH11909.1"/>
    <property type="status" value="ALT_INIT"/>
    <property type="molecule type" value="mRNA"/>
</dbReference>
<dbReference type="EMBL" id="AK299523">
    <property type="protein sequence ID" value="BAH13058.1"/>
    <property type="molecule type" value="mRNA"/>
</dbReference>
<dbReference type="EMBL" id="AL591866">
    <property type="status" value="NOT_ANNOTATED_CDS"/>
    <property type="molecule type" value="Genomic_DNA"/>
</dbReference>
<dbReference type="EMBL" id="AL158217">
    <property type="status" value="NOT_ANNOTATED_CDS"/>
    <property type="molecule type" value="Genomic_DNA"/>
</dbReference>
<dbReference type="EMBL" id="CH471130">
    <property type="protein sequence ID" value="EAW71539.1"/>
    <property type="molecule type" value="Genomic_DNA"/>
</dbReference>
<dbReference type="EMBL" id="CH471130">
    <property type="protein sequence ID" value="EAW71547.1"/>
    <property type="molecule type" value="Genomic_DNA"/>
</dbReference>
<dbReference type="EMBL" id="BC015231">
    <property type="protein sequence ID" value="AAH15231.1"/>
    <property type="molecule type" value="mRNA"/>
</dbReference>
<dbReference type="EMBL" id="BC042606">
    <property type="status" value="NOT_ANNOTATED_CDS"/>
    <property type="molecule type" value="mRNA"/>
</dbReference>
<dbReference type="EMBL" id="AB097001">
    <property type="protein sequence ID" value="BAC77354.1"/>
    <property type="status" value="ALT_SEQ"/>
    <property type="molecule type" value="mRNA"/>
</dbReference>
<dbReference type="EMBL" id="AK131074">
    <property type="protein sequence ID" value="BAC85124.1"/>
    <property type="status" value="ALT_SEQ"/>
    <property type="molecule type" value="mRNA"/>
</dbReference>
<dbReference type="CCDS" id="CCDS41241.2">
    <molecule id="O94827-3"/>
</dbReference>
<dbReference type="CCDS" id="CCDS57967.1">
    <molecule id="O94827-4"/>
</dbReference>
<dbReference type="CCDS" id="CCDS57968.1">
    <molecule id="O94827-7"/>
</dbReference>
<dbReference type="CCDS" id="CCDS79.1">
    <molecule id="O94827-5"/>
</dbReference>
<dbReference type="RefSeq" id="NP_001036128.2">
    <molecule id="O94827-3"/>
    <property type="nucleotide sequence ID" value="NM_001042663.3"/>
</dbReference>
<dbReference type="RefSeq" id="NP_001036129.1">
    <molecule id="O94827-5"/>
    <property type="nucleotide sequence ID" value="NM_001042664.2"/>
</dbReference>
<dbReference type="RefSeq" id="NP_001036130.1">
    <molecule id="O94827-5"/>
    <property type="nucleotide sequence ID" value="NM_001042665.2"/>
</dbReference>
<dbReference type="RefSeq" id="NP_001252521.2">
    <molecule id="O94827-3"/>
    <property type="nucleotide sequence ID" value="NM_001265592.2"/>
</dbReference>
<dbReference type="RefSeq" id="NP_001252522.1">
    <property type="nucleotide sequence ID" value="NM_001265593.1"/>
</dbReference>
<dbReference type="RefSeq" id="NP_001252523.1">
    <molecule id="O94827-4"/>
    <property type="nucleotide sequence ID" value="NM_001265594.3"/>
</dbReference>
<dbReference type="RefSeq" id="NP_065682.2">
    <molecule id="O94827-5"/>
    <property type="nucleotide sequence ID" value="NM_020631.4"/>
</dbReference>
<dbReference type="RefSeq" id="NP_941374.3">
    <molecule id="O94827-5"/>
    <property type="nucleotide sequence ID" value="NM_198681.4"/>
</dbReference>
<dbReference type="SMR" id="O94827"/>
<dbReference type="BioGRID" id="121522">
    <property type="interactions" value="29"/>
</dbReference>
<dbReference type="FunCoup" id="O94827">
    <property type="interactions" value="597"/>
</dbReference>
<dbReference type="IntAct" id="O94827">
    <property type="interactions" value="20"/>
</dbReference>
<dbReference type="STRING" id="9606.ENSP00000439625"/>
<dbReference type="GlyGen" id="O94827">
    <property type="glycosylation" value="1 site"/>
</dbReference>
<dbReference type="iPTMnet" id="O94827"/>
<dbReference type="PhosphoSitePlus" id="O94827"/>
<dbReference type="BioMuta" id="PLEKHG5"/>
<dbReference type="jPOST" id="O94827"/>
<dbReference type="MassIVE" id="O94827"/>
<dbReference type="PaxDb" id="9606-ENSP00000439625"/>
<dbReference type="PeptideAtlas" id="O94827"/>
<dbReference type="ProteomicsDB" id="24913"/>
<dbReference type="ProteomicsDB" id="25662"/>
<dbReference type="ProteomicsDB" id="50471">
    <molecule id="O94827-3"/>
</dbReference>
<dbReference type="ProteomicsDB" id="50472">
    <molecule id="O94827-4"/>
</dbReference>
<dbReference type="ProteomicsDB" id="50473">
    <molecule id="O94827-5"/>
</dbReference>
<dbReference type="Antibodypedia" id="27380">
    <property type="antibodies" value="145 antibodies from 25 providers"/>
</dbReference>
<dbReference type="DNASU" id="57449"/>
<dbReference type="Ensembl" id="ENST00000340850.10">
    <molecule id="O94827-5"/>
    <property type="protein sequence ID" value="ENSP00000344570.5"/>
    <property type="gene ID" value="ENSG00000171680.23"/>
</dbReference>
<dbReference type="Ensembl" id="ENST00000377725.5">
    <molecule id="O94827-4"/>
    <property type="protein sequence ID" value="ENSP00000366954.1"/>
    <property type="gene ID" value="ENSG00000171680.23"/>
</dbReference>
<dbReference type="Ensembl" id="ENST00000377728.8">
    <molecule id="O94827-5"/>
    <property type="protein sequence ID" value="ENSP00000366957.3"/>
    <property type="gene ID" value="ENSG00000171680.23"/>
</dbReference>
<dbReference type="Ensembl" id="ENST00000377732.5">
    <molecule id="O94827-3"/>
    <property type="protein sequence ID" value="ENSP00000366961.1"/>
    <property type="gene ID" value="ENSG00000171680.23"/>
</dbReference>
<dbReference type="Ensembl" id="ENST00000377740.5">
    <molecule id="O94827-5"/>
    <property type="protein sequence ID" value="ENSP00000366969.4"/>
    <property type="gene ID" value="ENSG00000171680.23"/>
</dbReference>
<dbReference type="Ensembl" id="ENST00000400913.6">
    <molecule id="O94827-5"/>
    <property type="protein sequence ID" value="ENSP00000383704.1"/>
    <property type="gene ID" value="ENSG00000171680.23"/>
</dbReference>
<dbReference type="Ensembl" id="ENST00000400915.8">
    <molecule id="O94827-3"/>
    <property type="protein sequence ID" value="ENSP00000383706.4"/>
    <property type="gene ID" value="ENSG00000171680.23"/>
</dbReference>
<dbReference type="Ensembl" id="ENST00000537245.6">
    <molecule id="O94827-3"/>
    <property type="protein sequence ID" value="ENSP00000439625.2"/>
    <property type="gene ID" value="ENSG00000171680.23"/>
</dbReference>
<dbReference type="Ensembl" id="ENST00000675694.1">
    <molecule id="O94827-5"/>
    <property type="protein sequence ID" value="ENSP00000501925.1"/>
    <property type="gene ID" value="ENSG00000171680.23"/>
</dbReference>
<dbReference type="GeneID" id="57449"/>
<dbReference type="KEGG" id="hsa:57449"/>
<dbReference type="MANE-Select" id="ENST00000377728.8">
    <property type="protein sequence ID" value="ENSP00000366957.3"/>
    <property type="RefSeq nucleotide sequence ID" value="NM_020631.6"/>
    <property type="RefSeq protein sequence ID" value="NP_065682.2"/>
</dbReference>
<dbReference type="UCSC" id="uc001ank.1">
    <molecule id="O94827-5"/>
    <property type="organism name" value="human"/>
</dbReference>
<dbReference type="AGR" id="HGNC:29105"/>
<dbReference type="CTD" id="57449"/>
<dbReference type="DisGeNET" id="57449"/>
<dbReference type="GeneCards" id="PLEKHG5"/>
<dbReference type="GeneReviews" id="PLEKHG5"/>
<dbReference type="HGNC" id="HGNC:29105">
    <property type="gene designation" value="PLEKHG5"/>
</dbReference>
<dbReference type="HPA" id="ENSG00000171680">
    <property type="expression patterns" value="Group enriched (brain, lymphoid tissue, pituitary gland, skin)"/>
</dbReference>
<dbReference type="MalaCards" id="PLEKHG5"/>
<dbReference type="MIM" id="611067">
    <property type="type" value="phenotype"/>
</dbReference>
<dbReference type="MIM" id="611101">
    <property type="type" value="gene"/>
</dbReference>
<dbReference type="MIM" id="615376">
    <property type="type" value="phenotype"/>
</dbReference>
<dbReference type="neXtProt" id="NX_O94827"/>
<dbReference type="OpenTargets" id="ENSG00000171680"/>
<dbReference type="Orphanet" id="369867">
    <property type="disease" value="Autosomal recessive intermediate Charcot-Marie-Tooth disease type C"/>
</dbReference>
<dbReference type="Orphanet" id="206580">
    <property type="disease" value="Autosomal recessive lower motor neuron disease with childhood onset"/>
</dbReference>
<dbReference type="PharmGKB" id="PA142671164"/>
<dbReference type="VEuPathDB" id="HostDB:ENSG00000171680"/>
<dbReference type="eggNOG" id="KOG3521">
    <property type="taxonomic scope" value="Eukaryota"/>
</dbReference>
<dbReference type="GeneTree" id="ENSGT00510000046843"/>
<dbReference type="HOGENOM" id="CLU_005851_0_0_1"/>
<dbReference type="InParanoid" id="O94827"/>
<dbReference type="OrthoDB" id="660555at2759"/>
<dbReference type="PAN-GO" id="O94827">
    <property type="GO annotations" value="5 GO annotations based on evolutionary models"/>
</dbReference>
<dbReference type="PhylomeDB" id="O94827"/>
<dbReference type="TreeFam" id="TF316755"/>
<dbReference type="PathwayCommons" id="O94827"/>
<dbReference type="Reactome" id="R-HSA-193648">
    <property type="pathway name" value="NRAGE signals death through JNK"/>
</dbReference>
<dbReference type="Reactome" id="R-HSA-416482">
    <property type="pathway name" value="G alpha (12/13) signalling events"/>
</dbReference>
<dbReference type="Reactome" id="R-HSA-8980692">
    <property type="pathway name" value="RHOA GTPase cycle"/>
</dbReference>
<dbReference type="Reactome" id="R-HSA-9696264">
    <property type="pathway name" value="RND3 GTPase cycle"/>
</dbReference>
<dbReference type="Reactome" id="R-HSA-9696273">
    <property type="pathway name" value="RND1 GTPase cycle"/>
</dbReference>
<dbReference type="SignaLink" id="O94827"/>
<dbReference type="SIGNOR" id="O94827"/>
<dbReference type="BioGRID-ORCS" id="57449">
    <property type="hits" value="22 hits in 1146 CRISPR screens"/>
</dbReference>
<dbReference type="ChiTaRS" id="PLEKHG5">
    <property type="organism name" value="human"/>
</dbReference>
<dbReference type="GeneWiki" id="PLEKHG5"/>
<dbReference type="GenomeRNAi" id="57449"/>
<dbReference type="Pharos" id="O94827">
    <property type="development level" value="Tbio"/>
</dbReference>
<dbReference type="PRO" id="PR:O94827"/>
<dbReference type="Proteomes" id="UP000005640">
    <property type="component" value="Chromosome 1"/>
</dbReference>
<dbReference type="RNAct" id="O94827">
    <property type="molecule type" value="protein"/>
</dbReference>
<dbReference type="Bgee" id="ENSG00000171680">
    <property type="expression patterns" value="Expressed in sural nerve and 109 other cell types or tissues"/>
</dbReference>
<dbReference type="ExpressionAtlas" id="O94827">
    <property type="expression patterns" value="baseline and differential"/>
</dbReference>
<dbReference type="GO" id="GO:0030424">
    <property type="term" value="C:axon"/>
    <property type="evidence" value="ECO:0000318"/>
    <property type="project" value="GO_Central"/>
</dbReference>
<dbReference type="GO" id="GO:0005911">
    <property type="term" value="C:cell-cell junction"/>
    <property type="evidence" value="ECO:0000250"/>
    <property type="project" value="UniProtKB"/>
</dbReference>
<dbReference type="GO" id="GO:0005737">
    <property type="term" value="C:cytoplasm"/>
    <property type="evidence" value="ECO:0000250"/>
    <property type="project" value="UniProtKB"/>
</dbReference>
<dbReference type="GO" id="GO:0005829">
    <property type="term" value="C:cytosol"/>
    <property type="evidence" value="ECO:0000304"/>
    <property type="project" value="Reactome"/>
</dbReference>
<dbReference type="GO" id="GO:0030139">
    <property type="term" value="C:endocytic vesicle"/>
    <property type="evidence" value="ECO:0000250"/>
    <property type="project" value="UniProtKB"/>
</dbReference>
<dbReference type="GO" id="GO:0030027">
    <property type="term" value="C:lamellipodium"/>
    <property type="evidence" value="ECO:0000250"/>
    <property type="project" value="UniProtKB"/>
</dbReference>
<dbReference type="GO" id="GO:0048471">
    <property type="term" value="C:perinuclear region of cytoplasm"/>
    <property type="evidence" value="ECO:0007669"/>
    <property type="project" value="UniProtKB-SubCell"/>
</dbReference>
<dbReference type="GO" id="GO:0005886">
    <property type="term" value="C:plasma membrane"/>
    <property type="evidence" value="ECO:0000318"/>
    <property type="project" value="GO_Central"/>
</dbReference>
<dbReference type="GO" id="GO:0005085">
    <property type="term" value="F:guanyl-nucleotide exchange factor activity"/>
    <property type="evidence" value="ECO:0000304"/>
    <property type="project" value="Reactome"/>
</dbReference>
<dbReference type="GO" id="GO:0035767">
    <property type="term" value="P:endothelial cell chemotaxis"/>
    <property type="evidence" value="ECO:0000250"/>
    <property type="project" value="UniProtKB"/>
</dbReference>
<dbReference type="GO" id="GO:0043542">
    <property type="term" value="P:endothelial cell migration"/>
    <property type="evidence" value="ECO:0000318"/>
    <property type="project" value="GO_Central"/>
</dbReference>
<dbReference type="GO" id="GO:0043123">
    <property type="term" value="P:positive regulation of canonical NF-kappaB signal transduction"/>
    <property type="evidence" value="ECO:0007001"/>
    <property type="project" value="UniProtKB"/>
</dbReference>
<dbReference type="GO" id="GO:0051056">
    <property type="term" value="P:regulation of small GTPase mediated signal transduction"/>
    <property type="evidence" value="ECO:0000304"/>
    <property type="project" value="Reactome"/>
</dbReference>
<dbReference type="GO" id="GO:0007266">
    <property type="term" value="P:Rho protein signal transduction"/>
    <property type="evidence" value="ECO:0000318"/>
    <property type="project" value="GO_Central"/>
</dbReference>
<dbReference type="CDD" id="cd13244">
    <property type="entry name" value="PH_PLEKHG5_G6"/>
    <property type="match status" value="1"/>
</dbReference>
<dbReference type="CDD" id="cd17068">
    <property type="entry name" value="RBD_PLEKHG5"/>
    <property type="match status" value="1"/>
</dbReference>
<dbReference type="CDD" id="cd00160">
    <property type="entry name" value="RhoGEF"/>
    <property type="match status" value="1"/>
</dbReference>
<dbReference type="FunFam" id="2.30.29.30:FF:000141">
    <property type="entry name" value="Pleckstrin homology domain-containing family G member 5"/>
    <property type="match status" value="1"/>
</dbReference>
<dbReference type="FunFam" id="1.20.900.10:FF:000017">
    <property type="entry name" value="pleckstrin homology domain-containing family G member 5 isoform X1"/>
    <property type="match status" value="1"/>
</dbReference>
<dbReference type="Gene3D" id="1.20.900.10">
    <property type="entry name" value="Dbl homology (DH) domain"/>
    <property type="match status" value="1"/>
</dbReference>
<dbReference type="Gene3D" id="2.30.29.30">
    <property type="entry name" value="Pleckstrin-homology domain (PH domain)/Phosphotyrosine-binding domain (PTB)"/>
    <property type="match status" value="1"/>
</dbReference>
<dbReference type="InterPro" id="IPR035899">
    <property type="entry name" value="DBL_dom_sf"/>
</dbReference>
<dbReference type="InterPro" id="IPR000219">
    <property type="entry name" value="DH_dom"/>
</dbReference>
<dbReference type="InterPro" id="IPR011993">
    <property type="entry name" value="PH-like_dom_sf"/>
</dbReference>
<dbReference type="InterPro" id="IPR001849">
    <property type="entry name" value="PH_domain"/>
</dbReference>
<dbReference type="InterPro" id="IPR040181">
    <property type="entry name" value="PKHG5/7"/>
</dbReference>
<dbReference type="InterPro" id="IPR029071">
    <property type="entry name" value="Ubiquitin-like_domsf"/>
</dbReference>
<dbReference type="PANTHER" id="PTHR13217:SF11">
    <property type="entry name" value="PLECKSTRIN HOMOLOGY DOMAIN-CONTAINING FAMILY G MEMBER 5"/>
    <property type="match status" value="1"/>
</dbReference>
<dbReference type="PANTHER" id="PTHR13217">
    <property type="entry name" value="PLECKSTRIN HOMOLOGY DOMAIN-CONTAINING FAMILY G MEMBER 7"/>
    <property type="match status" value="1"/>
</dbReference>
<dbReference type="Pfam" id="PF00621">
    <property type="entry name" value="RhoGEF"/>
    <property type="match status" value="1"/>
</dbReference>
<dbReference type="SMART" id="SM00233">
    <property type="entry name" value="PH"/>
    <property type="match status" value="1"/>
</dbReference>
<dbReference type="SMART" id="SM00325">
    <property type="entry name" value="RhoGEF"/>
    <property type="match status" value="1"/>
</dbReference>
<dbReference type="SUPFAM" id="SSF48065">
    <property type="entry name" value="DBL homology domain (DH-domain)"/>
    <property type="match status" value="1"/>
</dbReference>
<dbReference type="SUPFAM" id="SSF50729">
    <property type="entry name" value="PH domain-like"/>
    <property type="match status" value="1"/>
</dbReference>
<dbReference type="SUPFAM" id="SSF54236">
    <property type="entry name" value="Ubiquitin-like"/>
    <property type="match status" value="1"/>
</dbReference>
<dbReference type="PROSITE" id="PS50010">
    <property type="entry name" value="DH_2"/>
    <property type="match status" value="1"/>
</dbReference>
<dbReference type="PROSITE" id="PS50003">
    <property type="entry name" value="PH_DOMAIN"/>
    <property type="match status" value="1"/>
</dbReference>
<name>PKHG5_HUMAN</name>
<proteinExistence type="evidence at protein level"/>
<accession>O94827</accession>
<accession>B3KU07</accession>
<accession>B7Z2M3</accession>
<accession>B7Z5X2</accession>
<accession>F5GZ21</accession>
<accession>F5H1I0</accession>
<accession>Q5SY17</accession>
<accession>Q5T8W5</accession>
<accession>Q5T8W9</accession>
<accession>Q6ZNM0</accession>
<accession>Q7Z436</accession>
<accession>Q86YD8</accession>
<accession>Q96BS1</accession>
<sequence>MHYDGHVRFDLPPQGSVLARNVSTRSCPPRTSPAVDLEEEEEESSVDGKGDRKSTGLKLSKKKARRRHTDDPSKECFTLKFDLNVDIETEIVPAMKKKSLGEVLLPVFERKGIALGKVDIYLDQSNTPLSLTFEAYRFGGHYLRVKAPAKPGDEGKVEQGMKDSKSLSLPILRPAGTGPPALERVDAQSRRESLDILAPGRRRKNMSEFLGEASIPGQEPPTPSSCSLPSGSSGSTNTGDSWKNRAASRFSGFFSSGPSTSAFGREVDKMEQLEGKLHTYSLFGLPRLPRGLRFDHDSWEEEYDEDEDEDNACLRLEDSWRELIDGHEKLTRRQCHQQEAVWELLHTEASYIRKLRVIINLFLCCLLNLQESGLLCEVEAERLFSNIPEIAQLHRRLWASVMAPVLEKARRTRALLQPGDFLKGFKMFGSLFKPYIRYCMEEEGCMEYMRGLLRDNDLFRAYITWAEKHPQCQRLKLSDMLAKPHQRLTKYPLLLKSVLRKTEEPRAKEAVVAMIGSVERFIHHVNACMRQRQERQRLAAVVSRIDAYEVVESSSDEVDKLLKEFLHLDLTAPIPGASPEETRQLLLEGSLRMKEGKDSKMDVYCFLFTDLLLVTKAVKKAERTRVIRPPLLVDKIVCRELRDPGSFLLIYLNEFHSAVGAYTFQASGQALCRGWVDTIYNAQNQLQQLRAQEPPGSQQPLQSLEEEEDEQEEEEEEEEEEEEGEDSGTSAASSPTIMRKSSGSPDSQHCASDGSTETLAMVVVEPGDTLSSPEFDSGPFSSQSDETSLSTTASSATPTSELLPLGPVDGRSCSMDSAYGTLSPTSLQDFVAPGPMAELVPRAPESPRVPSPPPSPRLRRRTPVQLLSCPPHLLKSKSEASLLQLLAGAGTHGTPSAPSRSLSELCLAVPAPGIRTQGSPQEAGPSWDCRGAPSPGSGPGLVGCLAGEPAGSHRKRCGDLPSGASPRVQPEPPPGVSAQHRKLTLAQLYRIRTTLLLNSTLTASEV</sequence>